<organism>
    <name type="scientific">Papio anubis</name>
    <name type="common">Olive baboon</name>
    <dbReference type="NCBI Taxonomy" id="9555"/>
    <lineage>
        <taxon>Eukaryota</taxon>
        <taxon>Metazoa</taxon>
        <taxon>Chordata</taxon>
        <taxon>Craniata</taxon>
        <taxon>Vertebrata</taxon>
        <taxon>Euteleostomi</taxon>
        <taxon>Mammalia</taxon>
        <taxon>Eutheria</taxon>
        <taxon>Euarchontoglires</taxon>
        <taxon>Primates</taxon>
        <taxon>Haplorrhini</taxon>
        <taxon>Catarrhini</taxon>
        <taxon>Cercopithecidae</taxon>
        <taxon>Cercopithecinae</taxon>
        <taxon>Papio</taxon>
    </lineage>
</organism>
<evidence type="ECO:0000250" key="1"/>
<evidence type="ECO:0000255" key="2">
    <source>
        <dbReference type="PROSITE-ProRule" id="PRU00108"/>
    </source>
</evidence>
<evidence type="ECO:0000256" key="3">
    <source>
        <dbReference type="SAM" id="MobiDB-lite"/>
    </source>
</evidence>
<evidence type="ECO:0000305" key="4"/>
<feature type="chain" id="PRO_0000333802" description="Homeobox protein Hox-A2">
    <location>
        <begin position="1"/>
        <end position="377"/>
    </location>
</feature>
<feature type="DNA-binding region" description="Homeobox" evidence="2">
    <location>
        <begin position="144"/>
        <end position="203"/>
    </location>
</feature>
<feature type="region of interest" description="Disordered" evidence="3">
    <location>
        <begin position="42"/>
        <end position="93"/>
    </location>
</feature>
<feature type="region of interest" description="Disordered" evidence="3">
    <location>
        <begin position="199"/>
        <end position="229"/>
    </location>
</feature>
<feature type="region of interest" description="Disordered" evidence="3">
    <location>
        <begin position="256"/>
        <end position="278"/>
    </location>
</feature>
<feature type="short sequence motif" description="Antp-type hexapeptide">
    <location>
        <begin position="94"/>
        <end position="99"/>
    </location>
</feature>
<reference key="1">
    <citation type="submission" date="2007-11" db="EMBL/GenBank/DDBJ databases">
        <title>NISC comparative sequencing initiative.</title>
        <authorList>
            <person name="Antonellis A."/>
            <person name="Benjamin B."/>
            <person name="Blakesley R.W."/>
            <person name="Bouffard G.G."/>
            <person name="Brinkley C."/>
            <person name="Brooks S."/>
            <person name="Chu G."/>
            <person name="Chub I."/>
            <person name="Coleman H."/>
            <person name="Fuksenko T."/>
            <person name="Gestole M."/>
            <person name="Gregory M."/>
            <person name="Guan X."/>
            <person name="Gupta J."/>
            <person name="Gurson N."/>
            <person name="Han E."/>
            <person name="Han J."/>
            <person name="Hansen N."/>
            <person name="Hargrove A."/>
            <person name="Hines-Harris K."/>
            <person name="Ho S.-L."/>
            <person name="Hu P."/>
            <person name="Hunter G."/>
            <person name="Hurle B."/>
            <person name="Idol J.R."/>
            <person name="Johnson T."/>
            <person name="Knight E."/>
            <person name="Kwong P."/>
            <person name="Lee-Lin S.-Q."/>
            <person name="Legaspi R."/>
            <person name="Madden M."/>
            <person name="Maduro Q.L."/>
            <person name="Maduro V.B."/>
            <person name="Margulies E.H."/>
            <person name="Masiello C."/>
            <person name="Maskeri B."/>
            <person name="McDowell J."/>
            <person name="Merkulov G."/>
            <person name="Montemayor C."/>
            <person name="Mullikin J.C."/>
            <person name="Park M."/>
            <person name="Prasad A."/>
            <person name="Ramsahoye C."/>
            <person name="Reddix-Dugue N."/>
            <person name="Riebow N."/>
            <person name="Schandler K."/>
            <person name="Schueler M.G."/>
            <person name="Sison C."/>
            <person name="Smith L."/>
            <person name="Stantripop S."/>
            <person name="Thomas J.W."/>
            <person name="Thomas P.J."/>
            <person name="Tsipouri V."/>
            <person name="Young A."/>
            <person name="Green E.D."/>
        </authorList>
    </citation>
    <scope>NUCLEOTIDE SEQUENCE [LARGE SCALE GENOMIC DNA]</scope>
</reference>
<keyword id="KW-0217">Developmental protein</keyword>
<keyword id="KW-0238">DNA-binding</keyword>
<keyword id="KW-0371">Homeobox</keyword>
<keyword id="KW-0539">Nucleus</keyword>
<keyword id="KW-1185">Reference proteome</keyword>
<keyword id="KW-0804">Transcription</keyword>
<keyword id="KW-0805">Transcription regulation</keyword>
<sequence length="377" mass="41162">MNYEFEREIGFINSQPSLAECLTSFPPVADTFQSSSIKTSTLSHSTLIPPPFEQTIPSLNPSNHPRHGAGGRPKPSPAGSRGSPVPAGALQPPEYPWMKEKKAAKKTALPPAAAAAAAAAAATGPACLSHKESLEIADGSGGGSRRLRTAYTNTQLLELEKEFHFNKYLCRPRRVEIAALLDLTERQVKVWFQNRRMKHKRQTQCKENQNSEGKCKSLEDSEKVEEEEEEKTLFEQALSVSGALLEREGYTFQQNALSQQQAPSGHNGDSQSFPVSPLTSNEKNLKHFQHQSPTVPNCLSTMGQNCGAGLNNDSPEALEVPSLQDFNVFSTDSCLQLSDTVSPSLPGSLDSPVDISADSFDFFTDTLTTIDLQHLNY</sequence>
<proteinExistence type="inferred from homology"/>
<dbReference type="EMBL" id="DP000507">
    <property type="protein sequence ID" value="ABX52200.1"/>
    <property type="molecule type" value="Genomic_DNA"/>
</dbReference>
<dbReference type="RefSeq" id="NP_001162366.1">
    <property type="nucleotide sequence ID" value="NM_001168895.1"/>
</dbReference>
<dbReference type="SMR" id="A9L937"/>
<dbReference type="STRING" id="9555.ENSPANP00000010485"/>
<dbReference type="Ensembl" id="ENSPANT00000007826.3">
    <property type="protein sequence ID" value="ENSPANP00000010485.1"/>
    <property type="gene ID" value="ENSPANG00000015067.3"/>
</dbReference>
<dbReference type="GeneID" id="100137359"/>
<dbReference type="KEGG" id="panu:100137359"/>
<dbReference type="CTD" id="3199"/>
<dbReference type="eggNOG" id="KOG0489">
    <property type="taxonomic scope" value="Eukaryota"/>
</dbReference>
<dbReference type="GeneTree" id="ENSGT00940000162533"/>
<dbReference type="HOGENOM" id="CLU_048378_0_0_1"/>
<dbReference type="OMA" id="IHDFQPF"/>
<dbReference type="OrthoDB" id="13934at314294"/>
<dbReference type="Proteomes" id="UP000028761">
    <property type="component" value="Chromosome 4"/>
</dbReference>
<dbReference type="Bgee" id="ENSPANG00000015067">
    <property type="expression patterns" value="Expressed in adrenal cortex and 26 other cell types or tissues"/>
</dbReference>
<dbReference type="GO" id="GO:0005654">
    <property type="term" value="C:nucleoplasm"/>
    <property type="evidence" value="ECO:0007669"/>
    <property type="project" value="Ensembl"/>
</dbReference>
<dbReference type="GO" id="GO:0001227">
    <property type="term" value="F:DNA-binding transcription repressor activity, RNA polymerase II-specific"/>
    <property type="evidence" value="ECO:0007669"/>
    <property type="project" value="Ensembl"/>
</dbReference>
<dbReference type="GO" id="GO:0000978">
    <property type="term" value="F:RNA polymerase II cis-regulatory region sequence-specific DNA binding"/>
    <property type="evidence" value="ECO:0007669"/>
    <property type="project" value="Ensembl"/>
</dbReference>
<dbReference type="GO" id="GO:0009952">
    <property type="term" value="P:anterior/posterior pattern specification"/>
    <property type="evidence" value="ECO:0007669"/>
    <property type="project" value="Ensembl"/>
</dbReference>
<dbReference type="GO" id="GO:0035284">
    <property type="term" value="P:brain segmentation"/>
    <property type="evidence" value="ECO:0007669"/>
    <property type="project" value="Ensembl"/>
</dbReference>
<dbReference type="GO" id="GO:0001709">
    <property type="term" value="P:cell fate determination"/>
    <property type="evidence" value="ECO:0007669"/>
    <property type="project" value="Ensembl"/>
</dbReference>
<dbReference type="GO" id="GO:0071300">
    <property type="term" value="P:cellular response to retinoic acid"/>
    <property type="evidence" value="ECO:0007669"/>
    <property type="project" value="Ensembl"/>
</dbReference>
<dbReference type="GO" id="GO:0009953">
    <property type="term" value="P:dorsal/ventral pattern formation"/>
    <property type="evidence" value="ECO:0007669"/>
    <property type="project" value="Ensembl"/>
</dbReference>
<dbReference type="GO" id="GO:0048703">
    <property type="term" value="P:embryonic viscerocranium morphogenesis"/>
    <property type="evidence" value="ECO:0007669"/>
    <property type="project" value="Ensembl"/>
</dbReference>
<dbReference type="GO" id="GO:0042474">
    <property type="term" value="P:middle ear morphogenesis"/>
    <property type="evidence" value="ECO:0007669"/>
    <property type="project" value="Ensembl"/>
</dbReference>
<dbReference type="GO" id="GO:0008045">
    <property type="term" value="P:motor neuron axon guidance"/>
    <property type="evidence" value="ECO:0007669"/>
    <property type="project" value="Ensembl"/>
</dbReference>
<dbReference type="GO" id="GO:0061061">
    <property type="term" value="P:muscle structure development"/>
    <property type="evidence" value="ECO:0007669"/>
    <property type="project" value="Ensembl"/>
</dbReference>
<dbReference type="GO" id="GO:0045665">
    <property type="term" value="P:negative regulation of neuron differentiation"/>
    <property type="evidence" value="ECO:0007669"/>
    <property type="project" value="Ensembl"/>
</dbReference>
<dbReference type="GO" id="GO:0045668">
    <property type="term" value="P:negative regulation of osteoblast differentiation"/>
    <property type="evidence" value="ECO:0007669"/>
    <property type="project" value="Ensembl"/>
</dbReference>
<dbReference type="GO" id="GO:0002076">
    <property type="term" value="P:osteoblast development"/>
    <property type="evidence" value="ECO:0007669"/>
    <property type="project" value="Ensembl"/>
</dbReference>
<dbReference type="GO" id="GO:0060037">
    <property type="term" value="P:pharyngeal system development"/>
    <property type="evidence" value="ECO:0007669"/>
    <property type="project" value="Ensembl"/>
</dbReference>
<dbReference type="GO" id="GO:0045944">
    <property type="term" value="P:positive regulation of transcription by RNA polymerase II"/>
    <property type="evidence" value="ECO:0007669"/>
    <property type="project" value="Ensembl"/>
</dbReference>
<dbReference type="GO" id="GO:0021568">
    <property type="term" value="P:rhombomere 2 development"/>
    <property type="evidence" value="ECO:0007669"/>
    <property type="project" value="Ensembl"/>
</dbReference>
<dbReference type="GO" id="GO:0021658">
    <property type="term" value="P:rhombomere 3 morphogenesis"/>
    <property type="evidence" value="ECO:0007669"/>
    <property type="project" value="Ensembl"/>
</dbReference>
<dbReference type="GO" id="GO:0007379">
    <property type="term" value="P:segment specification"/>
    <property type="evidence" value="ECO:0007669"/>
    <property type="project" value="Ensembl"/>
</dbReference>
<dbReference type="CDD" id="cd00086">
    <property type="entry name" value="homeodomain"/>
    <property type="match status" value="1"/>
</dbReference>
<dbReference type="FunFam" id="1.10.10.60:FF:000145">
    <property type="entry name" value="homeobox protein Hox-A2"/>
    <property type="match status" value="1"/>
</dbReference>
<dbReference type="Gene3D" id="1.10.10.60">
    <property type="entry name" value="Homeodomain-like"/>
    <property type="match status" value="1"/>
</dbReference>
<dbReference type="InterPro" id="IPR001356">
    <property type="entry name" value="HD"/>
</dbReference>
<dbReference type="InterPro" id="IPR020479">
    <property type="entry name" value="HD_metazoa"/>
</dbReference>
<dbReference type="InterPro" id="IPR001827">
    <property type="entry name" value="Homeobox_Antennapedia_CS"/>
</dbReference>
<dbReference type="InterPro" id="IPR017970">
    <property type="entry name" value="Homeobox_CS"/>
</dbReference>
<dbReference type="InterPro" id="IPR009057">
    <property type="entry name" value="Homeodomain-like_sf"/>
</dbReference>
<dbReference type="PANTHER" id="PTHR45664:SF3">
    <property type="entry name" value="HOMEOBOX PROTEIN HOX-A2"/>
    <property type="match status" value="1"/>
</dbReference>
<dbReference type="PANTHER" id="PTHR45664">
    <property type="entry name" value="PROTEIN ZERKNUELLT 1-RELATED"/>
    <property type="match status" value="1"/>
</dbReference>
<dbReference type="Pfam" id="PF00046">
    <property type="entry name" value="Homeodomain"/>
    <property type="match status" value="1"/>
</dbReference>
<dbReference type="PRINTS" id="PR00024">
    <property type="entry name" value="HOMEOBOX"/>
</dbReference>
<dbReference type="SMART" id="SM00389">
    <property type="entry name" value="HOX"/>
    <property type="match status" value="1"/>
</dbReference>
<dbReference type="SUPFAM" id="SSF46689">
    <property type="entry name" value="Homeodomain-like"/>
    <property type="match status" value="1"/>
</dbReference>
<dbReference type="PROSITE" id="PS00032">
    <property type="entry name" value="ANTENNAPEDIA"/>
    <property type="match status" value="1"/>
</dbReference>
<dbReference type="PROSITE" id="PS00027">
    <property type="entry name" value="HOMEOBOX_1"/>
    <property type="match status" value="1"/>
</dbReference>
<dbReference type="PROSITE" id="PS50071">
    <property type="entry name" value="HOMEOBOX_2"/>
    <property type="match status" value="1"/>
</dbReference>
<gene>
    <name type="primary">HOXA2</name>
</gene>
<protein>
    <recommendedName>
        <fullName>Homeobox protein Hox-A2</fullName>
    </recommendedName>
</protein>
<comment type="function">
    <text evidence="1">Sequence-specific transcription factor which is part of a developmental regulatory system that provides cells with specific positional identities on the anterior-posterior axis.</text>
</comment>
<comment type="subcellular location">
    <subcellularLocation>
        <location evidence="2">Nucleus</location>
    </subcellularLocation>
</comment>
<comment type="similarity">
    <text evidence="4">Belongs to the Antp homeobox family. Proboscipedia subfamily.</text>
</comment>
<accession>A9L937</accession>
<name>HXA2_PAPAN</name>